<dbReference type="EMBL" id="CP000046">
    <property type="protein sequence ID" value="AAW38802.1"/>
    <property type="molecule type" value="Genomic_DNA"/>
</dbReference>
<dbReference type="RefSeq" id="WP_001792906.1">
    <property type="nucleotide sequence ID" value="NZ_JBGOFO010000001.1"/>
</dbReference>
<dbReference type="SMR" id="Q5HJB4"/>
<dbReference type="KEGG" id="sac:SACOL0247"/>
<dbReference type="HOGENOM" id="CLU_113736_0_1_9"/>
<dbReference type="Proteomes" id="UP000000530">
    <property type="component" value="Chromosome"/>
</dbReference>
<dbReference type="GO" id="GO:0005886">
    <property type="term" value="C:plasma membrane"/>
    <property type="evidence" value="ECO:0007669"/>
    <property type="project" value="UniProtKB-SubCell"/>
</dbReference>
<dbReference type="GO" id="GO:0019835">
    <property type="term" value="P:cytolysis"/>
    <property type="evidence" value="ECO:0007669"/>
    <property type="project" value="UniProtKB-UniRule"/>
</dbReference>
<dbReference type="GO" id="GO:0031640">
    <property type="term" value="P:killing of cells of another organism"/>
    <property type="evidence" value="ECO:0007669"/>
    <property type="project" value="UniProtKB-KW"/>
</dbReference>
<dbReference type="GO" id="GO:0012501">
    <property type="term" value="P:programmed cell death"/>
    <property type="evidence" value="ECO:0007669"/>
    <property type="project" value="UniProtKB-UniRule"/>
</dbReference>
<dbReference type="HAMAP" id="MF_01141">
    <property type="entry name" value="LrgA"/>
    <property type="match status" value="1"/>
</dbReference>
<dbReference type="InterPro" id="IPR023736">
    <property type="entry name" value="Antiholin-like_LrgA"/>
</dbReference>
<dbReference type="InterPro" id="IPR005538">
    <property type="entry name" value="LrgA/CidA"/>
</dbReference>
<dbReference type="NCBIfam" id="NF003155">
    <property type="entry name" value="PRK04125.1"/>
    <property type="match status" value="1"/>
</dbReference>
<dbReference type="PANTHER" id="PTHR33931:SF4">
    <property type="entry name" value="ANTIHOLIN-LIKE PROTEIN LRGA"/>
    <property type="match status" value="1"/>
</dbReference>
<dbReference type="PANTHER" id="PTHR33931">
    <property type="entry name" value="HOLIN-LIKE PROTEIN CIDA-RELATED"/>
    <property type="match status" value="1"/>
</dbReference>
<dbReference type="Pfam" id="PF03788">
    <property type="entry name" value="LrgA"/>
    <property type="match status" value="1"/>
</dbReference>
<feature type="chain" id="PRO_0000213190" description="Antiholin-like protein LrgA">
    <location>
        <begin position="1"/>
        <end position="147"/>
    </location>
</feature>
<feature type="transmembrane region" description="Helical" evidence="1">
    <location>
        <begin position="12"/>
        <end position="32"/>
    </location>
</feature>
<feature type="transmembrane region" description="Helical" evidence="1">
    <location>
        <begin position="35"/>
        <end position="55"/>
    </location>
</feature>
<feature type="transmembrane region" description="Helical" evidence="1">
    <location>
        <begin position="74"/>
        <end position="94"/>
    </location>
</feature>
<feature type="transmembrane region" description="Helical" evidence="1">
    <location>
        <begin position="98"/>
        <end position="118"/>
    </location>
</feature>
<evidence type="ECO:0000255" key="1">
    <source>
        <dbReference type="HAMAP-Rule" id="MF_01141"/>
    </source>
</evidence>
<protein>
    <recommendedName>
        <fullName evidence="1">Antiholin-like protein LrgA</fullName>
    </recommendedName>
</protein>
<proteinExistence type="inferred from homology"/>
<reference key="1">
    <citation type="journal article" date="2005" name="J. Bacteriol.">
        <title>Insights on evolution of virulence and resistance from the complete genome analysis of an early methicillin-resistant Staphylococcus aureus strain and a biofilm-producing methicillin-resistant Staphylococcus epidermidis strain.</title>
        <authorList>
            <person name="Gill S.R."/>
            <person name="Fouts D.E."/>
            <person name="Archer G.L."/>
            <person name="Mongodin E.F."/>
            <person name="DeBoy R.T."/>
            <person name="Ravel J."/>
            <person name="Paulsen I.T."/>
            <person name="Kolonay J.F."/>
            <person name="Brinkac L.M."/>
            <person name="Beanan M.J."/>
            <person name="Dodson R.J."/>
            <person name="Daugherty S.C."/>
            <person name="Madupu R."/>
            <person name="Angiuoli S.V."/>
            <person name="Durkin A.S."/>
            <person name="Haft D.H."/>
            <person name="Vamathevan J.J."/>
            <person name="Khouri H."/>
            <person name="Utterback T.R."/>
            <person name="Lee C."/>
            <person name="Dimitrov G."/>
            <person name="Jiang L."/>
            <person name="Qin H."/>
            <person name="Weidman J."/>
            <person name="Tran K."/>
            <person name="Kang K.H."/>
            <person name="Hance I.R."/>
            <person name="Nelson K.E."/>
            <person name="Fraser C.M."/>
        </authorList>
    </citation>
    <scope>NUCLEOTIDE SEQUENCE [LARGE SCALE GENOMIC DNA]</scope>
    <source>
        <strain>COL</strain>
    </source>
</reference>
<comment type="function">
    <text evidence="1">Inhibits the expression or activity of extracellular murein hydrolases by interacting, possibly with LrgB, with the holin-like proteins CidA and/or CidB. The LrgAB and CidAB proteins may affect the proton motive force of the membrane. May be involved in programmed cell death (PCD), possibly triggering PCD in response to antibiotics and environmental stresses.</text>
</comment>
<comment type="subcellular location">
    <subcellularLocation>
        <location evidence="1">Cell membrane</location>
        <topology evidence="1">Multi-pass membrane protein</topology>
    </subcellularLocation>
</comment>
<comment type="similarity">
    <text evidence="1">Belongs to the CidA/LrgA family. LrgA subfamily.</text>
</comment>
<gene>
    <name evidence="1" type="primary">lrgA</name>
    <name type="ordered locus">SACOL0247</name>
</gene>
<sequence length="147" mass="15780">MVVKQQKDASKPAHFFHQVIVIALVLFVSKIIESFMPIPMPASVIGLVLLFVLLCTGAVKLGEVEKVGTTLTNNIGLLFVPAGISVVNSLGVISQAPFLIIGLIIVSTILLLICTGYVTQIIMKVTSRSKGDKVTKKIKIEEAQAHD</sequence>
<organism>
    <name type="scientific">Staphylococcus aureus (strain COL)</name>
    <dbReference type="NCBI Taxonomy" id="93062"/>
    <lineage>
        <taxon>Bacteria</taxon>
        <taxon>Bacillati</taxon>
        <taxon>Bacillota</taxon>
        <taxon>Bacilli</taxon>
        <taxon>Bacillales</taxon>
        <taxon>Staphylococcaceae</taxon>
        <taxon>Staphylococcus</taxon>
    </lineage>
</organism>
<name>LRGA_STAAC</name>
<accession>Q5HJB4</accession>
<keyword id="KW-1003">Cell membrane</keyword>
<keyword id="KW-0204">Cytolysis</keyword>
<keyword id="KW-0472">Membrane</keyword>
<keyword id="KW-0812">Transmembrane</keyword>
<keyword id="KW-1133">Transmembrane helix</keyword>